<dbReference type="EMBL" id="CP000049">
    <property type="protein sequence ID" value="AAX17764.1"/>
    <property type="molecule type" value="Genomic_DNA"/>
</dbReference>
<dbReference type="RefSeq" id="WP_011772383.1">
    <property type="nucleotide sequence ID" value="NC_008710.1"/>
</dbReference>
<dbReference type="SMR" id="A1QZM2"/>
<dbReference type="KEGG" id="btu:BT0437"/>
<dbReference type="eggNOG" id="COG0593">
    <property type="taxonomic scope" value="Bacteria"/>
</dbReference>
<dbReference type="HOGENOM" id="CLU_026910_3_1_12"/>
<dbReference type="Proteomes" id="UP000001205">
    <property type="component" value="Chromosome"/>
</dbReference>
<dbReference type="GO" id="GO:0005737">
    <property type="term" value="C:cytoplasm"/>
    <property type="evidence" value="ECO:0007669"/>
    <property type="project" value="UniProtKB-SubCell"/>
</dbReference>
<dbReference type="GO" id="GO:0005886">
    <property type="term" value="C:plasma membrane"/>
    <property type="evidence" value="ECO:0007669"/>
    <property type="project" value="TreeGrafter"/>
</dbReference>
<dbReference type="GO" id="GO:0005524">
    <property type="term" value="F:ATP binding"/>
    <property type="evidence" value="ECO:0007669"/>
    <property type="project" value="UniProtKB-UniRule"/>
</dbReference>
<dbReference type="GO" id="GO:0016887">
    <property type="term" value="F:ATP hydrolysis activity"/>
    <property type="evidence" value="ECO:0007669"/>
    <property type="project" value="InterPro"/>
</dbReference>
<dbReference type="GO" id="GO:0003688">
    <property type="term" value="F:DNA replication origin binding"/>
    <property type="evidence" value="ECO:0007669"/>
    <property type="project" value="UniProtKB-UniRule"/>
</dbReference>
<dbReference type="GO" id="GO:0008289">
    <property type="term" value="F:lipid binding"/>
    <property type="evidence" value="ECO:0007669"/>
    <property type="project" value="UniProtKB-KW"/>
</dbReference>
<dbReference type="GO" id="GO:0006270">
    <property type="term" value="P:DNA replication initiation"/>
    <property type="evidence" value="ECO:0007669"/>
    <property type="project" value="UniProtKB-UniRule"/>
</dbReference>
<dbReference type="GO" id="GO:0006275">
    <property type="term" value="P:regulation of DNA replication"/>
    <property type="evidence" value="ECO:0007669"/>
    <property type="project" value="UniProtKB-UniRule"/>
</dbReference>
<dbReference type="CDD" id="cd00009">
    <property type="entry name" value="AAA"/>
    <property type="match status" value="1"/>
</dbReference>
<dbReference type="CDD" id="cd06571">
    <property type="entry name" value="Bac_DnaA_C"/>
    <property type="match status" value="1"/>
</dbReference>
<dbReference type="FunFam" id="3.40.50.300:FF:000668">
    <property type="entry name" value="Chromosomal replication initiator protein DnaA"/>
    <property type="match status" value="1"/>
</dbReference>
<dbReference type="Gene3D" id="1.10.1750.10">
    <property type="match status" value="1"/>
</dbReference>
<dbReference type="Gene3D" id="1.10.8.60">
    <property type="match status" value="1"/>
</dbReference>
<dbReference type="Gene3D" id="3.30.300.180">
    <property type="match status" value="1"/>
</dbReference>
<dbReference type="Gene3D" id="3.40.50.300">
    <property type="entry name" value="P-loop containing nucleotide triphosphate hydrolases"/>
    <property type="match status" value="1"/>
</dbReference>
<dbReference type="HAMAP" id="MF_00377">
    <property type="entry name" value="DnaA_bact"/>
    <property type="match status" value="1"/>
</dbReference>
<dbReference type="InterPro" id="IPR003593">
    <property type="entry name" value="AAA+_ATPase"/>
</dbReference>
<dbReference type="InterPro" id="IPR001957">
    <property type="entry name" value="Chromosome_initiator_DnaA"/>
</dbReference>
<dbReference type="InterPro" id="IPR020591">
    <property type="entry name" value="Chromosome_initiator_DnaA-like"/>
</dbReference>
<dbReference type="InterPro" id="IPR018312">
    <property type="entry name" value="Chromosome_initiator_DnaA_CS"/>
</dbReference>
<dbReference type="InterPro" id="IPR013159">
    <property type="entry name" value="DnaA_C"/>
</dbReference>
<dbReference type="InterPro" id="IPR013317">
    <property type="entry name" value="DnaA_dom"/>
</dbReference>
<dbReference type="InterPro" id="IPR024633">
    <property type="entry name" value="DnaA_N_dom"/>
</dbReference>
<dbReference type="InterPro" id="IPR038454">
    <property type="entry name" value="DnaA_N_sf"/>
</dbReference>
<dbReference type="InterPro" id="IPR027417">
    <property type="entry name" value="P-loop_NTPase"/>
</dbReference>
<dbReference type="InterPro" id="IPR010921">
    <property type="entry name" value="Trp_repressor/repl_initiator"/>
</dbReference>
<dbReference type="NCBIfam" id="TIGR00362">
    <property type="entry name" value="DnaA"/>
    <property type="match status" value="1"/>
</dbReference>
<dbReference type="PANTHER" id="PTHR30050">
    <property type="entry name" value="CHROMOSOMAL REPLICATION INITIATOR PROTEIN DNAA"/>
    <property type="match status" value="1"/>
</dbReference>
<dbReference type="PANTHER" id="PTHR30050:SF2">
    <property type="entry name" value="CHROMOSOMAL REPLICATION INITIATOR PROTEIN DNAA"/>
    <property type="match status" value="1"/>
</dbReference>
<dbReference type="Pfam" id="PF00308">
    <property type="entry name" value="Bac_DnaA"/>
    <property type="match status" value="1"/>
</dbReference>
<dbReference type="Pfam" id="PF08299">
    <property type="entry name" value="Bac_DnaA_C"/>
    <property type="match status" value="1"/>
</dbReference>
<dbReference type="Pfam" id="PF11638">
    <property type="entry name" value="DnaA_N"/>
    <property type="match status" value="1"/>
</dbReference>
<dbReference type="PRINTS" id="PR00051">
    <property type="entry name" value="DNAA"/>
</dbReference>
<dbReference type="SMART" id="SM00382">
    <property type="entry name" value="AAA"/>
    <property type="match status" value="1"/>
</dbReference>
<dbReference type="SMART" id="SM00760">
    <property type="entry name" value="Bac_DnaA_C"/>
    <property type="match status" value="1"/>
</dbReference>
<dbReference type="SUPFAM" id="SSF52540">
    <property type="entry name" value="P-loop containing nucleoside triphosphate hydrolases"/>
    <property type="match status" value="1"/>
</dbReference>
<dbReference type="SUPFAM" id="SSF48295">
    <property type="entry name" value="TrpR-like"/>
    <property type="match status" value="1"/>
</dbReference>
<dbReference type="PROSITE" id="PS01008">
    <property type="entry name" value="DNAA"/>
    <property type="match status" value="1"/>
</dbReference>
<comment type="function">
    <text evidence="1">Plays an essential role in the initiation and regulation of chromosomal replication. ATP-DnaA binds to the origin of replication (oriC) to initiate formation of the DNA replication initiation complex once per cell cycle. Binds the DnaA box (a 9 base pair repeat at the origin) and separates the double-stranded (ds)DNA. Forms a right-handed helical filament on oriC DNA; dsDNA binds to the exterior of the filament while single-stranded (ss)DNA is stabiized in the filament's interior. The ATP-DnaA-oriC complex binds and stabilizes one strand of the AT-rich DNA unwinding element (DUE), permitting loading of DNA polymerase. After initiation quickly degrades to an ADP-DnaA complex that is not apt for DNA replication. Binds acidic phospholipids.</text>
</comment>
<comment type="subunit">
    <text evidence="1">Oligomerizes as a right-handed, spiral filament on DNA at oriC.</text>
</comment>
<comment type="subcellular location">
    <subcellularLocation>
        <location evidence="1">Cytoplasm</location>
    </subcellularLocation>
</comment>
<comment type="domain">
    <text evidence="1">Domain I is involved in oligomerization and binding regulators, domain II is flexibile and of varying length in different bacteria, domain III forms the AAA+ region, while domain IV binds dsDNA.</text>
</comment>
<comment type="similarity">
    <text evidence="1">Belongs to the DnaA family.</text>
</comment>
<organism>
    <name type="scientific">Borrelia turicatae (strain 91E135)</name>
    <dbReference type="NCBI Taxonomy" id="314724"/>
    <lineage>
        <taxon>Bacteria</taxon>
        <taxon>Pseudomonadati</taxon>
        <taxon>Spirochaetota</taxon>
        <taxon>Spirochaetia</taxon>
        <taxon>Spirochaetales</taxon>
        <taxon>Borreliaceae</taxon>
        <taxon>Borrelia</taxon>
    </lineage>
</organism>
<name>DNAA_BORT9</name>
<protein>
    <recommendedName>
        <fullName evidence="1">Chromosomal replication initiator protein DnaA</fullName>
    </recommendedName>
</protein>
<gene>
    <name evidence="1" type="primary">dnaA</name>
    <name type="ordered locus">BT0437</name>
</gene>
<reference key="1">
    <citation type="submission" date="2004-12" db="EMBL/GenBank/DDBJ databases">
        <title>The genome sequence of Borrelia hermsii and Borrelia turicatae: comparative analysis of two agents of endemic N. America relapsing fever.</title>
        <authorList>
            <person name="Porcella S.F."/>
            <person name="Raffel S.J."/>
            <person name="Schrumpf M.E."/>
            <person name="Montgomery B."/>
            <person name="Smith T."/>
            <person name="Schwan T.G."/>
        </authorList>
    </citation>
    <scope>NUCLEOTIDE SEQUENCE [LARGE SCALE GENOMIC DNA]</scope>
    <source>
        <strain>91E135</strain>
    </source>
</reference>
<evidence type="ECO:0000255" key="1">
    <source>
        <dbReference type="HAMAP-Rule" id="MF_00377"/>
    </source>
</evidence>
<sequence>MQEGKNIWSLILAAIRKELSEEEFYIWFENLYFIDATDESIKISAPNSFHKNQVEKRFSKRIKEILTEKGHNTINVEFINPPKEPKTHSMELKNTSLKDISIQQDSPEKRTILNTHTKNIIEHTKHYVIKEDIHTKYRNPFLKKKYTFENFIIGPNNKLAYNASLSIAKNPGKKYNPCLIYGGVGLGKTHLLQSIGNKTEELHKEFKILYVTAENFLNEFVESIKTNETKRFKKKYRHLDMLLIDDIHDLQKKEGIQEELFHTFNALYEDNKQMVFTCDRQPSELINFTDRLKSRFTRGLNVDISKPNFELRVAIIEKKAEEDGIKVPKNILNLVAKKVTTNIRDLEAAVTKLKAHIDLEDIEIDTSIVDKIIKEIIAYENDKTNTNNTINIESIKKVILRELKLTNKDIEGNSKKPEITKARHIYAYLLRNFTELSTIEIGKIIGGKTHSTVLYSINKIDKERNNDLEINNLIIELMNKINKN</sequence>
<accession>A1QZM2</accession>
<proteinExistence type="inferred from homology"/>
<feature type="chain" id="PRO_1000189784" description="Chromosomal replication initiator protein DnaA">
    <location>
        <begin position="1"/>
        <end position="484"/>
    </location>
</feature>
<feature type="region of interest" description="Domain I, interacts with DnaA modulators" evidence="1">
    <location>
        <begin position="1"/>
        <end position="73"/>
    </location>
</feature>
<feature type="region of interest" description="Domain II" evidence="1">
    <location>
        <begin position="73"/>
        <end position="140"/>
    </location>
</feature>
<feature type="region of interest" description="Domain III, AAA+ region" evidence="1">
    <location>
        <begin position="141"/>
        <end position="357"/>
    </location>
</feature>
<feature type="region of interest" description="Domain IV, binds dsDNA" evidence="1">
    <location>
        <begin position="358"/>
        <end position="484"/>
    </location>
</feature>
<feature type="binding site" evidence="1">
    <location>
        <position position="185"/>
    </location>
    <ligand>
        <name>ATP</name>
        <dbReference type="ChEBI" id="CHEBI:30616"/>
    </ligand>
</feature>
<feature type="binding site" evidence="1">
    <location>
        <position position="187"/>
    </location>
    <ligand>
        <name>ATP</name>
        <dbReference type="ChEBI" id="CHEBI:30616"/>
    </ligand>
</feature>
<feature type="binding site" evidence="1">
    <location>
        <position position="188"/>
    </location>
    <ligand>
        <name>ATP</name>
        <dbReference type="ChEBI" id="CHEBI:30616"/>
    </ligand>
</feature>
<feature type="binding site" evidence="1">
    <location>
        <position position="189"/>
    </location>
    <ligand>
        <name>ATP</name>
        <dbReference type="ChEBI" id="CHEBI:30616"/>
    </ligand>
</feature>
<keyword id="KW-0067">ATP-binding</keyword>
<keyword id="KW-0963">Cytoplasm</keyword>
<keyword id="KW-0235">DNA replication</keyword>
<keyword id="KW-0238">DNA-binding</keyword>
<keyword id="KW-0446">Lipid-binding</keyword>
<keyword id="KW-0547">Nucleotide-binding</keyword>
<keyword id="KW-1185">Reference proteome</keyword>